<sequence length="599" mass="67528">MKYIRNFSIIAHVNHGKSTLSDRFIQICGGLCDREMMSQVLDSMELERERGITIKSQSVTLNYRSRSNEQFYQLNLIDTPGHVDFSYEVSRALAACEGAVLVVDAAQGIEAQTVANYRIAMERDLKVIIALNKIDLLTADINRVSKEIEEIIGINSNDIILCSAKTGLGVLDILERIIIDIPVPQGNCDAPLQALIIDSWFNNYLGVISLICVKNGILHKGDTIQSMNTGQIYIVNQLGIFTPKQVQRMSLNCGEVGWLVYTSKNHRVMGAPVGDTLTLLINPAQKSLPNFKKIQPYVYAGLFPAGSTSQKVFADALYKLSLNDSSLHYESEYSEYLGLGFRCGFLGLLHMEIIQERLKREYAIDLIITTPGVMYEVLVVDDQIIYVDNPLKLLSITGIKEIREPIVLCNFLMPKKYLGEIIVLCVEKRGVQVSLVYKADQVMLTYELPMSEIILDFFDRMKSISNGYASLEYTFNRFQASDMVCIEILINGQRVNALAVIVHRITAEFQGRILVNKLKSLILRQQFDIVIQAVIGKRVICRDVIKQLRKNVTHKCYGGDVTRKKKLLHNQKIGKKRMKQVGKVNLPNSVFMSILNRDS</sequence>
<evidence type="ECO:0000255" key="1">
    <source>
        <dbReference type="HAMAP-Rule" id="MF_00071"/>
    </source>
</evidence>
<comment type="function">
    <text evidence="1">Required for accurate and efficient protein synthesis under certain stress conditions. May act as a fidelity factor of the translation reaction, by catalyzing a one-codon backward translocation of tRNAs on improperly translocated ribosomes. Back-translocation proceeds from a post-translocation (POST) complex to a pre-translocation (PRE) complex, thus giving elongation factor G a second chance to translocate the tRNAs correctly. Binds to ribosomes in a GTP-dependent manner.</text>
</comment>
<comment type="catalytic activity">
    <reaction evidence="1">
        <text>GTP + H2O = GDP + phosphate + H(+)</text>
        <dbReference type="Rhea" id="RHEA:19669"/>
        <dbReference type="ChEBI" id="CHEBI:15377"/>
        <dbReference type="ChEBI" id="CHEBI:15378"/>
        <dbReference type="ChEBI" id="CHEBI:37565"/>
        <dbReference type="ChEBI" id="CHEBI:43474"/>
        <dbReference type="ChEBI" id="CHEBI:58189"/>
        <dbReference type="EC" id="3.6.5.n1"/>
    </reaction>
</comment>
<comment type="subcellular location">
    <subcellularLocation>
        <location evidence="1">Cell inner membrane</location>
        <topology evidence="1">Peripheral membrane protein</topology>
        <orientation evidence="1">Cytoplasmic side</orientation>
    </subcellularLocation>
</comment>
<comment type="similarity">
    <text evidence="1">Belongs to the TRAFAC class translation factor GTPase superfamily. Classic translation factor GTPase family. LepA subfamily.</text>
</comment>
<accession>Q7VRQ8</accession>
<protein>
    <recommendedName>
        <fullName evidence="1">Elongation factor 4</fullName>
        <shortName evidence="1">EF-4</shortName>
        <ecNumber evidence="1">3.6.5.n1</ecNumber>
    </recommendedName>
    <alternativeName>
        <fullName evidence="1">Ribosomal back-translocase LepA</fullName>
    </alternativeName>
</protein>
<organism>
    <name type="scientific">Blochmanniella floridana</name>
    <dbReference type="NCBI Taxonomy" id="203907"/>
    <lineage>
        <taxon>Bacteria</taxon>
        <taxon>Pseudomonadati</taxon>
        <taxon>Pseudomonadota</taxon>
        <taxon>Gammaproteobacteria</taxon>
        <taxon>Enterobacterales</taxon>
        <taxon>Enterobacteriaceae</taxon>
        <taxon>ant endosymbionts</taxon>
        <taxon>Candidatus Blochmanniella</taxon>
    </lineage>
</organism>
<name>LEPA_BLOFL</name>
<reference key="1">
    <citation type="journal article" date="2003" name="Proc. Natl. Acad. Sci. U.S.A.">
        <title>The genome sequence of Blochmannia floridanus: comparative analysis of reduced genomes.</title>
        <authorList>
            <person name="Gil R."/>
            <person name="Silva F.J."/>
            <person name="Zientz E."/>
            <person name="Delmotte F."/>
            <person name="Gonzalez-Candelas F."/>
            <person name="Latorre A."/>
            <person name="Rausell C."/>
            <person name="Kamerbeek J."/>
            <person name="Gadau J."/>
            <person name="Hoelldobler B."/>
            <person name="van Ham R.C.H.J."/>
            <person name="Gross R."/>
            <person name="Moya A."/>
        </authorList>
    </citation>
    <scope>NUCLEOTIDE SEQUENCE [LARGE SCALE GENOMIC DNA]</scope>
</reference>
<gene>
    <name evidence="1" type="primary">lepA</name>
    <name type="ordered locus">Bfl542</name>
</gene>
<proteinExistence type="inferred from homology"/>
<dbReference type="EC" id="3.6.5.n1" evidence="1"/>
<dbReference type="EMBL" id="BX248583">
    <property type="protein sequence ID" value="CAD83228.1"/>
    <property type="molecule type" value="Genomic_DNA"/>
</dbReference>
<dbReference type="SMR" id="Q7VRQ8"/>
<dbReference type="STRING" id="203907.Bfl542"/>
<dbReference type="KEGG" id="bfl:Bfl542"/>
<dbReference type="eggNOG" id="COG0481">
    <property type="taxonomic scope" value="Bacteria"/>
</dbReference>
<dbReference type="HOGENOM" id="CLU_009995_3_3_6"/>
<dbReference type="OrthoDB" id="9804431at2"/>
<dbReference type="Proteomes" id="UP000002192">
    <property type="component" value="Chromosome"/>
</dbReference>
<dbReference type="GO" id="GO:0005886">
    <property type="term" value="C:plasma membrane"/>
    <property type="evidence" value="ECO:0007669"/>
    <property type="project" value="UniProtKB-SubCell"/>
</dbReference>
<dbReference type="GO" id="GO:0005525">
    <property type="term" value="F:GTP binding"/>
    <property type="evidence" value="ECO:0007669"/>
    <property type="project" value="UniProtKB-UniRule"/>
</dbReference>
<dbReference type="GO" id="GO:0003924">
    <property type="term" value="F:GTPase activity"/>
    <property type="evidence" value="ECO:0007669"/>
    <property type="project" value="UniProtKB-UniRule"/>
</dbReference>
<dbReference type="GO" id="GO:0097216">
    <property type="term" value="F:guanosine tetraphosphate binding"/>
    <property type="evidence" value="ECO:0007669"/>
    <property type="project" value="UniProtKB-ARBA"/>
</dbReference>
<dbReference type="GO" id="GO:0043022">
    <property type="term" value="F:ribosome binding"/>
    <property type="evidence" value="ECO:0007669"/>
    <property type="project" value="UniProtKB-UniRule"/>
</dbReference>
<dbReference type="GO" id="GO:0003746">
    <property type="term" value="F:translation elongation factor activity"/>
    <property type="evidence" value="ECO:0007669"/>
    <property type="project" value="UniProtKB-UniRule"/>
</dbReference>
<dbReference type="GO" id="GO:0045727">
    <property type="term" value="P:positive regulation of translation"/>
    <property type="evidence" value="ECO:0007669"/>
    <property type="project" value="UniProtKB-UniRule"/>
</dbReference>
<dbReference type="CDD" id="cd01890">
    <property type="entry name" value="LepA"/>
    <property type="match status" value="1"/>
</dbReference>
<dbReference type="CDD" id="cd03709">
    <property type="entry name" value="lepA_C"/>
    <property type="match status" value="1"/>
</dbReference>
<dbReference type="FunFam" id="3.40.50.300:FF:000078">
    <property type="entry name" value="Elongation factor 4"/>
    <property type="match status" value="1"/>
</dbReference>
<dbReference type="FunFam" id="2.40.30.10:FF:000015">
    <property type="entry name" value="Translation factor GUF1, mitochondrial"/>
    <property type="match status" value="1"/>
</dbReference>
<dbReference type="FunFam" id="3.30.70.240:FF:000007">
    <property type="entry name" value="Translation factor GUF1, mitochondrial"/>
    <property type="match status" value="1"/>
</dbReference>
<dbReference type="FunFam" id="3.30.70.2570:FF:000001">
    <property type="entry name" value="Translation factor GUF1, mitochondrial"/>
    <property type="match status" value="1"/>
</dbReference>
<dbReference type="FunFam" id="3.30.70.870:FF:000004">
    <property type="entry name" value="Translation factor GUF1, mitochondrial"/>
    <property type="match status" value="1"/>
</dbReference>
<dbReference type="Gene3D" id="3.30.70.240">
    <property type="match status" value="1"/>
</dbReference>
<dbReference type="Gene3D" id="3.30.70.2570">
    <property type="entry name" value="Elongation factor 4, C-terminal domain"/>
    <property type="match status" value="1"/>
</dbReference>
<dbReference type="Gene3D" id="3.30.70.870">
    <property type="entry name" value="Elongation Factor G (Translational Gtpase), domain 3"/>
    <property type="match status" value="1"/>
</dbReference>
<dbReference type="Gene3D" id="3.40.50.300">
    <property type="entry name" value="P-loop containing nucleotide triphosphate hydrolases"/>
    <property type="match status" value="1"/>
</dbReference>
<dbReference type="Gene3D" id="2.40.30.10">
    <property type="entry name" value="Translation factors"/>
    <property type="match status" value="1"/>
</dbReference>
<dbReference type="HAMAP" id="MF_00071">
    <property type="entry name" value="LepA"/>
    <property type="match status" value="1"/>
</dbReference>
<dbReference type="InterPro" id="IPR006297">
    <property type="entry name" value="EF-4"/>
</dbReference>
<dbReference type="InterPro" id="IPR035647">
    <property type="entry name" value="EFG_III/V"/>
</dbReference>
<dbReference type="InterPro" id="IPR000640">
    <property type="entry name" value="EFG_V-like"/>
</dbReference>
<dbReference type="InterPro" id="IPR031157">
    <property type="entry name" value="G_TR_CS"/>
</dbReference>
<dbReference type="InterPro" id="IPR038363">
    <property type="entry name" value="LepA_C_sf"/>
</dbReference>
<dbReference type="InterPro" id="IPR013842">
    <property type="entry name" value="LepA_CTD"/>
</dbReference>
<dbReference type="InterPro" id="IPR035654">
    <property type="entry name" value="LepA_IV"/>
</dbReference>
<dbReference type="InterPro" id="IPR027417">
    <property type="entry name" value="P-loop_NTPase"/>
</dbReference>
<dbReference type="InterPro" id="IPR005225">
    <property type="entry name" value="Small_GTP-bd"/>
</dbReference>
<dbReference type="InterPro" id="IPR000795">
    <property type="entry name" value="T_Tr_GTP-bd_dom"/>
</dbReference>
<dbReference type="NCBIfam" id="TIGR01393">
    <property type="entry name" value="lepA"/>
    <property type="match status" value="1"/>
</dbReference>
<dbReference type="NCBIfam" id="TIGR00231">
    <property type="entry name" value="small_GTP"/>
    <property type="match status" value="1"/>
</dbReference>
<dbReference type="PANTHER" id="PTHR43512:SF4">
    <property type="entry name" value="TRANSLATION FACTOR GUF1 HOMOLOG, CHLOROPLASTIC"/>
    <property type="match status" value="1"/>
</dbReference>
<dbReference type="PANTHER" id="PTHR43512">
    <property type="entry name" value="TRANSLATION FACTOR GUF1-RELATED"/>
    <property type="match status" value="1"/>
</dbReference>
<dbReference type="Pfam" id="PF00679">
    <property type="entry name" value="EFG_C"/>
    <property type="match status" value="1"/>
</dbReference>
<dbReference type="Pfam" id="PF00009">
    <property type="entry name" value="GTP_EFTU"/>
    <property type="match status" value="1"/>
</dbReference>
<dbReference type="Pfam" id="PF06421">
    <property type="entry name" value="LepA_C"/>
    <property type="match status" value="1"/>
</dbReference>
<dbReference type="PRINTS" id="PR00315">
    <property type="entry name" value="ELONGATNFCT"/>
</dbReference>
<dbReference type="SUPFAM" id="SSF54980">
    <property type="entry name" value="EF-G C-terminal domain-like"/>
    <property type="match status" value="2"/>
</dbReference>
<dbReference type="SUPFAM" id="SSF52540">
    <property type="entry name" value="P-loop containing nucleoside triphosphate hydrolases"/>
    <property type="match status" value="1"/>
</dbReference>
<dbReference type="PROSITE" id="PS00301">
    <property type="entry name" value="G_TR_1"/>
    <property type="match status" value="1"/>
</dbReference>
<dbReference type="PROSITE" id="PS51722">
    <property type="entry name" value="G_TR_2"/>
    <property type="match status" value="1"/>
</dbReference>
<keyword id="KW-0997">Cell inner membrane</keyword>
<keyword id="KW-1003">Cell membrane</keyword>
<keyword id="KW-0342">GTP-binding</keyword>
<keyword id="KW-0378">Hydrolase</keyword>
<keyword id="KW-0472">Membrane</keyword>
<keyword id="KW-0547">Nucleotide-binding</keyword>
<keyword id="KW-0648">Protein biosynthesis</keyword>
<keyword id="KW-1185">Reference proteome</keyword>
<feature type="chain" id="PRO_0000176253" description="Elongation factor 4">
    <location>
        <begin position="1"/>
        <end position="599"/>
    </location>
</feature>
<feature type="domain" description="tr-type G">
    <location>
        <begin position="2"/>
        <end position="185"/>
    </location>
</feature>
<feature type="binding site" evidence="1">
    <location>
        <begin position="14"/>
        <end position="19"/>
    </location>
    <ligand>
        <name>GTP</name>
        <dbReference type="ChEBI" id="CHEBI:37565"/>
    </ligand>
</feature>
<feature type="binding site" evidence="1">
    <location>
        <begin position="132"/>
        <end position="135"/>
    </location>
    <ligand>
        <name>GTP</name>
        <dbReference type="ChEBI" id="CHEBI:37565"/>
    </ligand>
</feature>